<protein>
    <recommendedName>
        <fullName evidence="1">1-(5-phosphoribosyl)-5-[(5-phosphoribosylamino)methylideneamino] imidazole-4-carboxamide isomerase</fullName>
        <ecNumber evidence="1">5.3.1.16</ecNumber>
    </recommendedName>
    <alternativeName>
        <fullName evidence="1">Phosphoribosylformimino-5-aminoimidazole carboxamide ribotide isomerase</fullName>
    </alternativeName>
</protein>
<keyword id="KW-0028">Amino-acid biosynthesis</keyword>
<keyword id="KW-0963">Cytoplasm</keyword>
<keyword id="KW-0368">Histidine biosynthesis</keyword>
<keyword id="KW-0413">Isomerase</keyword>
<keyword id="KW-1185">Reference proteome</keyword>
<organism>
    <name type="scientific">Synechococcus sp. (strain RCC307)</name>
    <dbReference type="NCBI Taxonomy" id="316278"/>
    <lineage>
        <taxon>Bacteria</taxon>
        <taxon>Bacillati</taxon>
        <taxon>Cyanobacteriota</taxon>
        <taxon>Cyanophyceae</taxon>
        <taxon>Synechococcales</taxon>
        <taxon>Synechococcaceae</taxon>
        <taxon>Synechococcus</taxon>
    </lineage>
</organism>
<gene>
    <name evidence="1" type="primary">hisA</name>
    <name type="ordered locus">SynRCC307_1010</name>
</gene>
<accession>A5GSQ4</accession>
<reference key="1">
    <citation type="submission" date="2006-05" db="EMBL/GenBank/DDBJ databases">
        <authorList>
            <consortium name="Genoscope"/>
        </authorList>
    </citation>
    <scope>NUCLEOTIDE SEQUENCE [LARGE SCALE GENOMIC DNA]</scope>
    <source>
        <strain>RCC307</strain>
    </source>
</reference>
<comment type="catalytic activity">
    <reaction evidence="1">
        <text>1-(5-phospho-beta-D-ribosyl)-5-[(5-phospho-beta-D-ribosylamino)methylideneamino]imidazole-4-carboxamide = 5-[(5-phospho-1-deoxy-D-ribulos-1-ylimino)methylamino]-1-(5-phospho-beta-D-ribosyl)imidazole-4-carboxamide</text>
        <dbReference type="Rhea" id="RHEA:15469"/>
        <dbReference type="ChEBI" id="CHEBI:58435"/>
        <dbReference type="ChEBI" id="CHEBI:58525"/>
        <dbReference type="EC" id="5.3.1.16"/>
    </reaction>
</comment>
<comment type="pathway">
    <text evidence="1">Amino-acid biosynthesis; L-histidine biosynthesis; L-histidine from 5-phospho-alpha-D-ribose 1-diphosphate: step 4/9.</text>
</comment>
<comment type="subcellular location">
    <subcellularLocation>
        <location evidence="1">Cytoplasm</location>
    </subcellularLocation>
</comment>
<comment type="similarity">
    <text evidence="1">Belongs to the HisA/HisF family.</text>
</comment>
<dbReference type="EC" id="5.3.1.16" evidence="1"/>
<dbReference type="EMBL" id="CT978603">
    <property type="protein sequence ID" value="CAK27913.1"/>
    <property type="molecule type" value="Genomic_DNA"/>
</dbReference>
<dbReference type="SMR" id="A5GSQ4"/>
<dbReference type="STRING" id="316278.SynRCC307_1010"/>
<dbReference type="KEGG" id="syr:SynRCC307_1010"/>
<dbReference type="eggNOG" id="COG0106">
    <property type="taxonomic scope" value="Bacteria"/>
</dbReference>
<dbReference type="HOGENOM" id="CLU_048577_1_1_3"/>
<dbReference type="OrthoDB" id="9807749at2"/>
<dbReference type="UniPathway" id="UPA00031">
    <property type="reaction ID" value="UER00009"/>
</dbReference>
<dbReference type="Proteomes" id="UP000001115">
    <property type="component" value="Chromosome"/>
</dbReference>
<dbReference type="GO" id="GO:0005737">
    <property type="term" value="C:cytoplasm"/>
    <property type="evidence" value="ECO:0007669"/>
    <property type="project" value="UniProtKB-SubCell"/>
</dbReference>
<dbReference type="GO" id="GO:0003949">
    <property type="term" value="F:1-(5-phosphoribosyl)-5-[(5-phosphoribosylamino)methylideneamino]imidazole-4-carboxamide isomerase activity"/>
    <property type="evidence" value="ECO:0007669"/>
    <property type="project" value="UniProtKB-UniRule"/>
</dbReference>
<dbReference type="GO" id="GO:0000105">
    <property type="term" value="P:L-histidine biosynthetic process"/>
    <property type="evidence" value="ECO:0007669"/>
    <property type="project" value="UniProtKB-UniRule"/>
</dbReference>
<dbReference type="GO" id="GO:0000162">
    <property type="term" value="P:L-tryptophan biosynthetic process"/>
    <property type="evidence" value="ECO:0007669"/>
    <property type="project" value="TreeGrafter"/>
</dbReference>
<dbReference type="CDD" id="cd04732">
    <property type="entry name" value="HisA"/>
    <property type="match status" value="1"/>
</dbReference>
<dbReference type="FunFam" id="3.20.20.70:FF:000009">
    <property type="entry name" value="1-(5-phosphoribosyl)-5-[(5-phosphoribosylamino)methylideneamino] imidazole-4-carboxamide isomerase"/>
    <property type="match status" value="1"/>
</dbReference>
<dbReference type="Gene3D" id="3.20.20.70">
    <property type="entry name" value="Aldolase class I"/>
    <property type="match status" value="1"/>
</dbReference>
<dbReference type="HAMAP" id="MF_01014">
    <property type="entry name" value="HisA"/>
    <property type="match status" value="1"/>
</dbReference>
<dbReference type="InterPro" id="IPR013785">
    <property type="entry name" value="Aldolase_TIM"/>
</dbReference>
<dbReference type="InterPro" id="IPR006062">
    <property type="entry name" value="His_biosynth"/>
</dbReference>
<dbReference type="InterPro" id="IPR006063">
    <property type="entry name" value="HisA_bact_arch"/>
</dbReference>
<dbReference type="InterPro" id="IPR044524">
    <property type="entry name" value="Isoase_HisA-like"/>
</dbReference>
<dbReference type="InterPro" id="IPR023016">
    <property type="entry name" value="Isoase_HisA-like_bact"/>
</dbReference>
<dbReference type="InterPro" id="IPR011060">
    <property type="entry name" value="RibuloseP-bd_barrel"/>
</dbReference>
<dbReference type="NCBIfam" id="TIGR00007">
    <property type="entry name" value="1-(5-phosphoribosyl)-5-[(5-phosphoribosylamino)methylideneamino]imidazole-4-carboxamide isomerase"/>
    <property type="match status" value="1"/>
</dbReference>
<dbReference type="NCBIfam" id="NF010112">
    <property type="entry name" value="PRK13585.1"/>
    <property type="match status" value="1"/>
</dbReference>
<dbReference type="PANTHER" id="PTHR43090">
    <property type="entry name" value="1-(5-PHOSPHORIBOSYL)-5-[(5-PHOSPHORIBOSYLAMINO)METHYLIDENEAMINO] IMIDAZOLE-4-CARBOXAMIDE ISOMERASE"/>
    <property type="match status" value="1"/>
</dbReference>
<dbReference type="PANTHER" id="PTHR43090:SF2">
    <property type="entry name" value="1-(5-PHOSPHORIBOSYL)-5-[(5-PHOSPHORIBOSYLAMINO)METHYLIDENEAMINO] IMIDAZOLE-4-CARBOXAMIDE ISOMERASE"/>
    <property type="match status" value="1"/>
</dbReference>
<dbReference type="Pfam" id="PF00977">
    <property type="entry name" value="His_biosynth"/>
    <property type="match status" value="1"/>
</dbReference>
<dbReference type="SUPFAM" id="SSF51366">
    <property type="entry name" value="Ribulose-phoshate binding barrel"/>
    <property type="match status" value="1"/>
</dbReference>
<proteinExistence type="inferred from homology"/>
<feature type="chain" id="PRO_1000063239" description="1-(5-phosphoribosyl)-5-[(5-phosphoribosylamino)methylideneamino] imidazole-4-carboxamide isomerase">
    <location>
        <begin position="1"/>
        <end position="252"/>
    </location>
</feature>
<feature type="active site" description="Proton acceptor" evidence="1">
    <location>
        <position position="8"/>
    </location>
</feature>
<feature type="active site" description="Proton donor" evidence="1">
    <location>
        <position position="129"/>
    </location>
</feature>
<sequence>MQIIPAIDLLQGSCVRLHQGDYDQVTRFSEDPVAQALEWQRQGASRLHLVDLDGARSGEPTNDSAVRAITAALSIPVQLGGGVRSLERAEALLSFGLDRVILGTVALEQPELVEQLAARYPGRIVVGIDARNGKVATRGWITDTDTEATSLAKRFEGLGLAAIVSTDIATDGTLAGPNLTALRAMVEASSTPVIASGGIGTVSDLLSLLPVGVSGVIVGRALYDGTVILSEALQAVGDGRLQDASSSQSSPC</sequence>
<name>HIS4_SYNR3</name>
<evidence type="ECO:0000255" key="1">
    <source>
        <dbReference type="HAMAP-Rule" id="MF_01014"/>
    </source>
</evidence>